<name>PNCB_RHILO</name>
<comment type="function">
    <text evidence="1">Catalyzes the synthesis of beta-nicotinate D-ribonucleotide from nicotinate and 5-phospho-D-ribose 1-phosphate at the expense of ATP.</text>
</comment>
<comment type="catalytic activity">
    <reaction evidence="1">
        <text>nicotinate + 5-phospho-alpha-D-ribose 1-diphosphate + ATP + H2O = nicotinate beta-D-ribonucleotide + ADP + phosphate + diphosphate</text>
        <dbReference type="Rhea" id="RHEA:36163"/>
        <dbReference type="ChEBI" id="CHEBI:15377"/>
        <dbReference type="ChEBI" id="CHEBI:30616"/>
        <dbReference type="ChEBI" id="CHEBI:32544"/>
        <dbReference type="ChEBI" id="CHEBI:33019"/>
        <dbReference type="ChEBI" id="CHEBI:43474"/>
        <dbReference type="ChEBI" id="CHEBI:57502"/>
        <dbReference type="ChEBI" id="CHEBI:58017"/>
        <dbReference type="ChEBI" id="CHEBI:456216"/>
        <dbReference type="EC" id="6.3.4.21"/>
    </reaction>
</comment>
<comment type="pathway">
    <text evidence="1">Cofactor biosynthesis; NAD(+) biosynthesis; nicotinate D-ribonucleotide from nicotinate: step 1/1.</text>
</comment>
<comment type="PTM">
    <text evidence="1">Transiently phosphorylated on a His residue during the reaction cycle. Phosphorylation strongly increases the affinity for substrates and increases the rate of nicotinate D-ribonucleotide production. Dephosphorylation regenerates the low-affinity form of the enzyme, leading to product release.</text>
</comment>
<comment type="similarity">
    <text evidence="1">Belongs to the NAPRTase family.</text>
</comment>
<accession>Q98D24</accession>
<reference key="1">
    <citation type="journal article" date="2000" name="DNA Res.">
        <title>Complete genome structure of the nitrogen-fixing symbiotic bacterium Mesorhizobium loti.</title>
        <authorList>
            <person name="Kaneko T."/>
            <person name="Nakamura Y."/>
            <person name="Sato S."/>
            <person name="Asamizu E."/>
            <person name="Kato T."/>
            <person name="Sasamoto S."/>
            <person name="Watanabe A."/>
            <person name="Idesawa K."/>
            <person name="Ishikawa A."/>
            <person name="Kawashima K."/>
            <person name="Kimura T."/>
            <person name="Kishida Y."/>
            <person name="Kiyokawa C."/>
            <person name="Kohara M."/>
            <person name="Matsumoto M."/>
            <person name="Matsuno A."/>
            <person name="Mochizuki Y."/>
            <person name="Nakayama S."/>
            <person name="Nakazaki N."/>
            <person name="Shimpo S."/>
            <person name="Sugimoto M."/>
            <person name="Takeuchi C."/>
            <person name="Yamada M."/>
            <person name="Tabata S."/>
        </authorList>
    </citation>
    <scope>NUCLEOTIDE SEQUENCE [LARGE SCALE GENOMIC DNA]</scope>
    <source>
        <strain>LMG 29417 / CECT 9101 / MAFF 303099</strain>
    </source>
</reference>
<proteinExistence type="inferred from homology"/>
<keyword id="KW-0436">Ligase</keyword>
<keyword id="KW-0597">Phosphoprotein</keyword>
<keyword id="KW-0662">Pyridine nucleotide biosynthesis</keyword>
<feature type="chain" id="PRO_0000205841" description="Nicotinate phosphoribosyltransferase">
    <location>
        <begin position="1"/>
        <end position="434"/>
    </location>
</feature>
<feature type="modified residue" description="Phosphohistidine; by autocatalysis" evidence="1">
    <location>
        <position position="242"/>
    </location>
</feature>
<protein>
    <recommendedName>
        <fullName evidence="1">Nicotinate phosphoribosyltransferase</fullName>
        <shortName evidence="1">NAPRTase</shortName>
        <ecNumber evidence="1">6.3.4.21</ecNumber>
    </recommendedName>
</protein>
<sequence length="434" mass="49889">MARTDIARRVYNHTWKLDPIVRSLLDTDFYKLLMLQMIWGMYPKVDATFSLINRTTSVRLADEIDEGELREQLDHARTLRFSKKEMIWLGGNNFYGRKQIFEPEFLAWLEGFRLPDYELSKRDGQYELSFSGPWMYTTLWEIPALAIINELRSRAAMRAFGPFALDVLYARAKAKMWAKTERLKALPGIRISDFGTRRRHSFLWQRWCVEALKEGIGEAFTGTSNVLLAMDNDLEALGTNAHELPMVFAALANSEKELKQAPYKVLQDWQRYYGGNLLIVLPDAFGTASFLRDAPDWVADWTGFRPDSAPPIEGGEKILSWWRERGKDPKQKLLIFSDGLEVETIEETYRHFKGKVRMSFGWGTNLTNDFEGCAPTETNSLDAISLVCKVTEANGRPAVKLSDNPAKATGDEKEIERYLRIFGEKDRVEQLVKV</sequence>
<evidence type="ECO:0000255" key="1">
    <source>
        <dbReference type="HAMAP-Rule" id="MF_00570"/>
    </source>
</evidence>
<gene>
    <name evidence="1" type="primary">pncB</name>
    <name type="ordered locus">mll4892</name>
</gene>
<dbReference type="EC" id="6.3.4.21" evidence="1"/>
<dbReference type="EMBL" id="BA000012">
    <property type="protein sequence ID" value="BAB51447.1"/>
    <property type="molecule type" value="Genomic_DNA"/>
</dbReference>
<dbReference type="RefSeq" id="WP_010912788.1">
    <property type="nucleotide sequence ID" value="NC_002678.2"/>
</dbReference>
<dbReference type="SMR" id="Q98D24"/>
<dbReference type="KEGG" id="mlo:mll4892"/>
<dbReference type="PATRIC" id="fig|266835.9.peg.3866"/>
<dbReference type="eggNOG" id="COG1488">
    <property type="taxonomic scope" value="Bacteria"/>
</dbReference>
<dbReference type="HOGENOM" id="CLU_030991_1_0_5"/>
<dbReference type="UniPathway" id="UPA00253">
    <property type="reaction ID" value="UER00457"/>
</dbReference>
<dbReference type="Proteomes" id="UP000000552">
    <property type="component" value="Chromosome"/>
</dbReference>
<dbReference type="GO" id="GO:0005829">
    <property type="term" value="C:cytosol"/>
    <property type="evidence" value="ECO:0007669"/>
    <property type="project" value="TreeGrafter"/>
</dbReference>
<dbReference type="GO" id="GO:0004516">
    <property type="term" value="F:nicotinate phosphoribosyltransferase activity"/>
    <property type="evidence" value="ECO:0007669"/>
    <property type="project" value="UniProtKB-UniRule"/>
</dbReference>
<dbReference type="GO" id="GO:0034355">
    <property type="term" value="P:NAD biosynthetic process via the salvage pathway"/>
    <property type="evidence" value="ECO:0007669"/>
    <property type="project" value="TreeGrafter"/>
</dbReference>
<dbReference type="CDD" id="cd01401">
    <property type="entry name" value="PncB_like"/>
    <property type="match status" value="1"/>
</dbReference>
<dbReference type="Gene3D" id="3.20.140.10">
    <property type="entry name" value="nicotinate phosphoribosyltransferase"/>
    <property type="match status" value="1"/>
</dbReference>
<dbReference type="HAMAP" id="MF_00570">
    <property type="entry name" value="NAPRTase"/>
    <property type="match status" value="1"/>
</dbReference>
<dbReference type="InterPro" id="IPR041525">
    <property type="entry name" value="N/Namide_PRibTrfase"/>
</dbReference>
<dbReference type="InterPro" id="IPR040727">
    <property type="entry name" value="NAPRTase_N"/>
</dbReference>
<dbReference type="InterPro" id="IPR006406">
    <property type="entry name" value="Nic_PRibTrfase"/>
</dbReference>
<dbReference type="InterPro" id="IPR007229">
    <property type="entry name" value="Nic_PRibTrfase-Fam"/>
</dbReference>
<dbReference type="InterPro" id="IPR036068">
    <property type="entry name" value="Nicotinate_pribotase-like_C"/>
</dbReference>
<dbReference type="NCBIfam" id="TIGR01514">
    <property type="entry name" value="NAPRTase"/>
    <property type="match status" value="1"/>
</dbReference>
<dbReference type="NCBIfam" id="NF003704">
    <property type="entry name" value="PRK05321.1"/>
    <property type="match status" value="1"/>
</dbReference>
<dbReference type="PANTHER" id="PTHR11098">
    <property type="entry name" value="NICOTINATE PHOSPHORIBOSYLTRANSFERASE"/>
    <property type="match status" value="1"/>
</dbReference>
<dbReference type="PANTHER" id="PTHR11098:SF1">
    <property type="entry name" value="NICOTINATE PHOSPHORIBOSYLTRANSFERASE"/>
    <property type="match status" value="1"/>
</dbReference>
<dbReference type="Pfam" id="PF04095">
    <property type="entry name" value="NAPRTase"/>
    <property type="match status" value="1"/>
</dbReference>
<dbReference type="Pfam" id="PF17767">
    <property type="entry name" value="NAPRTase_N"/>
    <property type="match status" value="1"/>
</dbReference>
<dbReference type="PIRSF" id="PIRSF000484">
    <property type="entry name" value="NAPRT"/>
    <property type="match status" value="1"/>
</dbReference>
<dbReference type="SUPFAM" id="SSF51690">
    <property type="entry name" value="Nicotinate/Quinolinate PRTase C-terminal domain-like"/>
    <property type="match status" value="1"/>
</dbReference>
<dbReference type="SUPFAM" id="SSF54675">
    <property type="entry name" value="Nicotinate/Quinolinate PRTase N-terminal domain-like"/>
    <property type="match status" value="1"/>
</dbReference>
<organism>
    <name type="scientific">Mesorhizobium japonicum (strain LMG 29417 / CECT 9101 / MAFF 303099)</name>
    <name type="common">Mesorhizobium loti (strain MAFF 303099)</name>
    <dbReference type="NCBI Taxonomy" id="266835"/>
    <lineage>
        <taxon>Bacteria</taxon>
        <taxon>Pseudomonadati</taxon>
        <taxon>Pseudomonadota</taxon>
        <taxon>Alphaproteobacteria</taxon>
        <taxon>Hyphomicrobiales</taxon>
        <taxon>Phyllobacteriaceae</taxon>
        <taxon>Mesorhizobium</taxon>
    </lineage>
</organism>